<dbReference type="EC" id="2.5.1.7" evidence="1"/>
<dbReference type="EMBL" id="AE017198">
    <property type="protein sequence ID" value="AAS08206.1"/>
    <property type="molecule type" value="Genomic_DNA"/>
</dbReference>
<dbReference type="RefSeq" id="WP_011161415.1">
    <property type="nucleotide sequence ID" value="NC_005362.1"/>
</dbReference>
<dbReference type="SMR" id="Q74LG1"/>
<dbReference type="KEGG" id="ljo:LJ_0225"/>
<dbReference type="eggNOG" id="COG0766">
    <property type="taxonomic scope" value="Bacteria"/>
</dbReference>
<dbReference type="HOGENOM" id="CLU_027387_0_0_9"/>
<dbReference type="UniPathway" id="UPA00219"/>
<dbReference type="Proteomes" id="UP000000581">
    <property type="component" value="Chromosome"/>
</dbReference>
<dbReference type="GO" id="GO:0005737">
    <property type="term" value="C:cytoplasm"/>
    <property type="evidence" value="ECO:0007669"/>
    <property type="project" value="UniProtKB-SubCell"/>
</dbReference>
<dbReference type="GO" id="GO:0008760">
    <property type="term" value="F:UDP-N-acetylglucosamine 1-carboxyvinyltransferase activity"/>
    <property type="evidence" value="ECO:0007669"/>
    <property type="project" value="UniProtKB-UniRule"/>
</dbReference>
<dbReference type="GO" id="GO:0051301">
    <property type="term" value="P:cell division"/>
    <property type="evidence" value="ECO:0007669"/>
    <property type="project" value="UniProtKB-KW"/>
</dbReference>
<dbReference type="GO" id="GO:0071555">
    <property type="term" value="P:cell wall organization"/>
    <property type="evidence" value="ECO:0007669"/>
    <property type="project" value="UniProtKB-KW"/>
</dbReference>
<dbReference type="GO" id="GO:0009252">
    <property type="term" value="P:peptidoglycan biosynthetic process"/>
    <property type="evidence" value="ECO:0007669"/>
    <property type="project" value="UniProtKB-UniRule"/>
</dbReference>
<dbReference type="GO" id="GO:0008360">
    <property type="term" value="P:regulation of cell shape"/>
    <property type="evidence" value="ECO:0007669"/>
    <property type="project" value="UniProtKB-KW"/>
</dbReference>
<dbReference type="GO" id="GO:0019277">
    <property type="term" value="P:UDP-N-acetylgalactosamine biosynthetic process"/>
    <property type="evidence" value="ECO:0007669"/>
    <property type="project" value="InterPro"/>
</dbReference>
<dbReference type="CDD" id="cd01555">
    <property type="entry name" value="UdpNAET"/>
    <property type="match status" value="1"/>
</dbReference>
<dbReference type="Gene3D" id="3.65.10.10">
    <property type="entry name" value="Enolpyruvate transferase domain"/>
    <property type="match status" value="2"/>
</dbReference>
<dbReference type="HAMAP" id="MF_00111">
    <property type="entry name" value="MurA"/>
    <property type="match status" value="1"/>
</dbReference>
<dbReference type="InterPro" id="IPR001986">
    <property type="entry name" value="Enolpyruvate_Tfrase_dom"/>
</dbReference>
<dbReference type="InterPro" id="IPR036968">
    <property type="entry name" value="Enolpyruvate_Tfrase_sf"/>
</dbReference>
<dbReference type="InterPro" id="IPR050068">
    <property type="entry name" value="MurA_subfamily"/>
</dbReference>
<dbReference type="InterPro" id="IPR013792">
    <property type="entry name" value="RNA3'P_cycl/enolpyr_Trfase_a/b"/>
</dbReference>
<dbReference type="InterPro" id="IPR005750">
    <property type="entry name" value="UDP_GlcNAc_COvinyl_MurA"/>
</dbReference>
<dbReference type="NCBIfam" id="TIGR01072">
    <property type="entry name" value="murA"/>
    <property type="match status" value="1"/>
</dbReference>
<dbReference type="NCBIfam" id="NF006873">
    <property type="entry name" value="PRK09369.1"/>
    <property type="match status" value="1"/>
</dbReference>
<dbReference type="NCBIfam" id="NF009470">
    <property type="entry name" value="PRK12830.1"/>
    <property type="match status" value="1"/>
</dbReference>
<dbReference type="PANTHER" id="PTHR43783">
    <property type="entry name" value="UDP-N-ACETYLGLUCOSAMINE 1-CARBOXYVINYLTRANSFERASE"/>
    <property type="match status" value="1"/>
</dbReference>
<dbReference type="PANTHER" id="PTHR43783:SF2">
    <property type="entry name" value="UDP-N-ACETYLGLUCOSAMINE 1-CARBOXYVINYLTRANSFERASE 2"/>
    <property type="match status" value="1"/>
</dbReference>
<dbReference type="Pfam" id="PF00275">
    <property type="entry name" value="EPSP_synthase"/>
    <property type="match status" value="1"/>
</dbReference>
<dbReference type="SUPFAM" id="SSF55205">
    <property type="entry name" value="EPT/RTPC-like"/>
    <property type="match status" value="1"/>
</dbReference>
<gene>
    <name evidence="1" type="primary">murA</name>
    <name type="ordered locus">LJ_0225</name>
</gene>
<accession>Q74LG1</accession>
<evidence type="ECO:0000255" key="1">
    <source>
        <dbReference type="HAMAP-Rule" id="MF_00111"/>
    </source>
</evidence>
<name>MURA_LACJO</name>
<keyword id="KW-0131">Cell cycle</keyword>
<keyword id="KW-0132">Cell division</keyword>
<keyword id="KW-0133">Cell shape</keyword>
<keyword id="KW-0961">Cell wall biogenesis/degradation</keyword>
<keyword id="KW-0963">Cytoplasm</keyword>
<keyword id="KW-0573">Peptidoglycan synthesis</keyword>
<keyword id="KW-0808">Transferase</keyword>
<proteinExistence type="inferred from homology"/>
<reference key="1">
    <citation type="journal article" date="2004" name="Proc. Natl. Acad. Sci. U.S.A.">
        <title>The genome sequence of the probiotic intestinal bacterium Lactobacillus johnsonii NCC 533.</title>
        <authorList>
            <person name="Pridmore R.D."/>
            <person name="Berger B."/>
            <person name="Desiere F."/>
            <person name="Vilanova D."/>
            <person name="Barretto C."/>
            <person name="Pittet A.-C."/>
            <person name="Zwahlen M.-C."/>
            <person name="Rouvet M."/>
            <person name="Altermann E."/>
            <person name="Barrangou R."/>
            <person name="Mollet B."/>
            <person name="Mercenier A."/>
            <person name="Klaenhammer T."/>
            <person name="Arigoni F."/>
            <person name="Schell M.A."/>
        </authorList>
    </citation>
    <scope>NUCLEOTIDE SEQUENCE [LARGE SCALE GENOMIC DNA]</scope>
    <source>
        <strain>CNCM I-1225 / La1 / NCC 533</strain>
    </source>
</reference>
<organism>
    <name type="scientific">Lactobacillus johnsonii (strain CNCM I-12250 / La1 / NCC 533)</name>
    <dbReference type="NCBI Taxonomy" id="257314"/>
    <lineage>
        <taxon>Bacteria</taxon>
        <taxon>Bacillati</taxon>
        <taxon>Bacillota</taxon>
        <taxon>Bacilli</taxon>
        <taxon>Lactobacillales</taxon>
        <taxon>Lactobacillaceae</taxon>
        <taxon>Lactobacillus</taxon>
    </lineage>
</organism>
<sequence>MKQMIIHGGKPLKGDVWIGGAKNSTVALIPASILSRTPVTLEGVPRIADVDNLMDLLSEMDVKCDFHETTLRINPDNIKRSPLPAGKIKSLRASYYFMGALLGRFGKAVVGFPGGDDIGPRPIDQHIKGFEALGATVENKNDQIIITAPKTGLRGAKIHLKMPSVGATMNIIMASVMAKGQTIIENAAKEPEIIDLATFLNNMGAVIRGAGTEVIRIEGVEELKAQTPHTIIPDRIEAGTYVALAACIGNGIRIHNIIEEHLDSYLAKVEEMGVVIDADEDSLYVYPAGDLKMIQVRTDVYPGFATDLQQPITPLLLTAKSGEGVVIDQIYPKRVGHIPELQKMGANIQVEDNIILVHPTHHLHGAHVSAGEIRAGACLMLAGLMADGETIISNAGNILRGYDRIEQKLRQLGAEVSVIDV</sequence>
<protein>
    <recommendedName>
        <fullName evidence="1">UDP-N-acetylglucosamine 1-carboxyvinyltransferase</fullName>
        <ecNumber evidence="1">2.5.1.7</ecNumber>
    </recommendedName>
    <alternativeName>
        <fullName evidence="1">Enoylpyruvate transferase</fullName>
    </alternativeName>
    <alternativeName>
        <fullName evidence="1">UDP-N-acetylglucosamine enolpyruvyl transferase</fullName>
        <shortName evidence="1">EPT</shortName>
    </alternativeName>
</protein>
<comment type="function">
    <text evidence="1">Cell wall formation. Adds enolpyruvyl to UDP-N-acetylglucosamine.</text>
</comment>
<comment type="catalytic activity">
    <reaction evidence="1">
        <text>phosphoenolpyruvate + UDP-N-acetyl-alpha-D-glucosamine = UDP-N-acetyl-3-O-(1-carboxyvinyl)-alpha-D-glucosamine + phosphate</text>
        <dbReference type="Rhea" id="RHEA:18681"/>
        <dbReference type="ChEBI" id="CHEBI:43474"/>
        <dbReference type="ChEBI" id="CHEBI:57705"/>
        <dbReference type="ChEBI" id="CHEBI:58702"/>
        <dbReference type="ChEBI" id="CHEBI:68483"/>
        <dbReference type="EC" id="2.5.1.7"/>
    </reaction>
</comment>
<comment type="pathway">
    <text evidence="1">Cell wall biogenesis; peptidoglycan biosynthesis.</text>
</comment>
<comment type="subcellular location">
    <subcellularLocation>
        <location evidence="1">Cytoplasm</location>
    </subcellularLocation>
</comment>
<comment type="similarity">
    <text evidence="1">Belongs to the EPSP synthase family. MurA subfamily.</text>
</comment>
<feature type="chain" id="PRO_0000231215" description="UDP-N-acetylglucosamine 1-carboxyvinyltransferase">
    <location>
        <begin position="1"/>
        <end position="421"/>
    </location>
</feature>
<feature type="active site" description="Proton donor" evidence="1">
    <location>
        <position position="116"/>
    </location>
</feature>
<feature type="binding site" evidence="1">
    <location>
        <begin position="22"/>
        <end position="23"/>
    </location>
    <ligand>
        <name>phosphoenolpyruvate</name>
        <dbReference type="ChEBI" id="CHEBI:58702"/>
    </ligand>
</feature>
<feature type="binding site" evidence="1">
    <location>
        <position position="92"/>
    </location>
    <ligand>
        <name>UDP-N-acetyl-alpha-D-glucosamine</name>
        <dbReference type="ChEBI" id="CHEBI:57705"/>
    </ligand>
</feature>
<feature type="binding site" evidence="1">
    <location>
        <begin position="121"/>
        <end position="125"/>
    </location>
    <ligand>
        <name>UDP-N-acetyl-alpha-D-glucosamine</name>
        <dbReference type="ChEBI" id="CHEBI:57705"/>
    </ligand>
</feature>
<feature type="binding site" evidence="1">
    <location>
        <position position="307"/>
    </location>
    <ligand>
        <name>UDP-N-acetyl-alpha-D-glucosamine</name>
        <dbReference type="ChEBI" id="CHEBI:57705"/>
    </ligand>
</feature>
<feature type="binding site" evidence="1">
    <location>
        <position position="330"/>
    </location>
    <ligand>
        <name>UDP-N-acetyl-alpha-D-glucosamine</name>
        <dbReference type="ChEBI" id="CHEBI:57705"/>
    </ligand>
</feature>